<reference key="1">
    <citation type="journal article" date="2006" name="Lancet">
        <title>Complete genome sequence of USA300, an epidemic clone of community-acquired meticillin-resistant Staphylococcus aureus.</title>
        <authorList>
            <person name="Diep B.A."/>
            <person name="Gill S.R."/>
            <person name="Chang R.F."/>
            <person name="Phan T.H."/>
            <person name="Chen J.H."/>
            <person name="Davidson M.G."/>
            <person name="Lin F."/>
            <person name="Lin J."/>
            <person name="Carleton H.A."/>
            <person name="Mongodin E.F."/>
            <person name="Sensabaugh G.F."/>
            <person name="Perdreau-Remington F."/>
        </authorList>
    </citation>
    <scope>NUCLEOTIDE SEQUENCE [LARGE SCALE GENOMIC DNA]</scope>
    <source>
        <strain>USA300</strain>
    </source>
</reference>
<name>MEND_STAA3</name>
<evidence type="ECO:0000255" key="1">
    <source>
        <dbReference type="HAMAP-Rule" id="MF_01659"/>
    </source>
</evidence>
<accession>Q2FI34</accession>
<gene>
    <name evidence="1" type="primary">menD</name>
    <name type="ordered locus">SAUSA300_0946</name>
</gene>
<proteinExistence type="inferred from homology"/>
<organism>
    <name type="scientific">Staphylococcus aureus (strain USA300)</name>
    <dbReference type="NCBI Taxonomy" id="367830"/>
    <lineage>
        <taxon>Bacteria</taxon>
        <taxon>Bacillati</taxon>
        <taxon>Bacillota</taxon>
        <taxon>Bacilli</taxon>
        <taxon>Bacillales</taxon>
        <taxon>Staphylococcaceae</taxon>
        <taxon>Staphylococcus</taxon>
    </lineage>
</organism>
<sequence length="557" mass="63078">MGNHKAALTKQVFTFASELYAYGVREVVISPGSRSTPLALAFEAHPNIKTWIHPDERSAAFFAVGLIKGSERPVAILCTSGTAAANYTPAIAESQISRIPLIVLTSDRPHELRSVGAPQAINQVNMFNNYVSYEFDMPIADDSKETIDAIYYQMQIASQYLYGPHKGPIHFNLPFRDPLTPDLNATELLTSEMKILPHYQKSIDASALRHILNKKKGLIIVGDMQHQEVDQILTYSTIYDLPILADPLSHLRKFDHPNVICTYDLLFRSGLDLNVDFVIRVGKPVISKKLNQWLKKTDAFQILVQNNDKIDVFPIAPDISYEISANDFFRSLMEDTTVNRVSWLEKWQCLEKKGRKEIKCYLEQATDESAFVGELIKKTSEKDALFISNSMPIRDVDNLLLNKNIDVYANRGANGIDGIVSTALGMAVHKRITLLIGDLSFYHDMNGLLMSKLNNIQMNIVLLNNDGGGIFSYLPQKESATDYFERLFGTPTGLDFEYTAKLYQFDFKRFNSVSEFKNATLLSETSTIYELITNREDNFKQHQILYQKLSEMIHDTL</sequence>
<comment type="function">
    <text evidence="1">Catalyzes the thiamine diphosphate-dependent decarboxylation of 2-oxoglutarate and the subsequent addition of the resulting succinic semialdehyde-thiamine pyrophosphate anion to isochorismate to yield 2-succinyl-5-enolpyruvyl-6-hydroxy-3-cyclohexene-1-carboxylate (SEPHCHC).</text>
</comment>
<comment type="catalytic activity">
    <reaction evidence="1">
        <text>isochorismate + 2-oxoglutarate + H(+) = 5-enolpyruvoyl-6-hydroxy-2-succinyl-cyclohex-3-ene-1-carboxylate + CO2</text>
        <dbReference type="Rhea" id="RHEA:25593"/>
        <dbReference type="ChEBI" id="CHEBI:15378"/>
        <dbReference type="ChEBI" id="CHEBI:16526"/>
        <dbReference type="ChEBI" id="CHEBI:16810"/>
        <dbReference type="ChEBI" id="CHEBI:29780"/>
        <dbReference type="ChEBI" id="CHEBI:58818"/>
        <dbReference type="EC" id="2.2.1.9"/>
    </reaction>
</comment>
<comment type="cofactor">
    <cofactor evidence="1">
        <name>Mg(2+)</name>
        <dbReference type="ChEBI" id="CHEBI:18420"/>
    </cofactor>
    <cofactor evidence="1">
        <name>Mn(2+)</name>
        <dbReference type="ChEBI" id="CHEBI:29035"/>
    </cofactor>
</comment>
<comment type="cofactor">
    <cofactor evidence="1">
        <name>thiamine diphosphate</name>
        <dbReference type="ChEBI" id="CHEBI:58937"/>
    </cofactor>
    <text evidence="1">Binds 1 thiamine pyrophosphate per subunit.</text>
</comment>
<comment type="pathway">
    <text evidence="1">Quinol/quinone metabolism; 1,4-dihydroxy-2-naphthoate biosynthesis; 1,4-dihydroxy-2-naphthoate from chorismate: step 2/7.</text>
</comment>
<comment type="pathway">
    <text evidence="1">Quinol/quinone metabolism; menaquinone biosynthesis.</text>
</comment>
<comment type="subunit">
    <text evidence="1">Homodimer.</text>
</comment>
<comment type="similarity">
    <text evidence="1">Belongs to the TPP enzyme family. MenD subfamily.</text>
</comment>
<keyword id="KW-0460">Magnesium</keyword>
<keyword id="KW-0464">Manganese</keyword>
<keyword id="KW-0474">Menaquinone biosynthesis</keyword>
<keyword id="KW-0479">Metal-binding</keyword>
<keyword id="KW-0786">Thiamine pyrophosphate</keyword>
<keyword id="KW-0808">Transferase</keyword>
<dbReference type="EC" id="2.2.1.9" evidence="1"/>
<dbReference type="EMBL" id="CP000255">
    <property type="protein sequence ID" value="ABD22875.1"/>
    <property type="molecule type" value="Genomic_DNA"/>
</dbReference>
<dbReference type="RefSeq" id="WP_000526687.1">
    <property type="nucleotide sequence ID" value="NZ_CP027476.1"/>
</dbReference>
<dbReference type="SMR" id="Q2FI34"/>
<dbReference type="KEGG" id="saa:SAUSA300_0946"/>
<dbReference type="HOGENOM" id="CLU_006051_3_0_9"/>
<dbReference type="OMA" id="YDSNALW"/>
<dbReference type="UniPathway" id="UPA00079"/>
<dbReference type="UniPathway" id="UPA01057">
    <property type="reaction ID" value="UER00164"/>
</dbReference>
<dbReference type="Proteomes" id="UP000001939">
    <property type="component" value="Chromosome"/>
</dbReference>
<dbReference type="GO" id="GO:0070204">
    <property type="term" value="F:2-succinyl-5-enolpyruvyl-6-hydroxy-3-cyclohexene-1-carboxylic-acid synthase activity"/>
    <property type="evidence" value="ECO:0007669"/>
    <property type="project" value="UniProtKB-UniRule"/>
</dbReference>
<dbReference type="GO" id="GO:0000287">
    <property type="term" value="F:magnesium ion binding"/>
    <property type="evidence" value="ECO:0007669"/>
    <property type="project" value="UniProtKB-UniRule"/>
</dbReference>
<dbReference type="GO" id="GO:0030145">
    <property type="term" value="F:manganese ion binding"/>
    <property type="evidence" value="ECO:0007669"/>
    <property type="project" value="UniProtKB-UniRule"/>
</dbReference>
<dbReference type="GO" id="GO:0030976">
    <property type="term" value="F:thiamine pyrophosphate binding"/>
    <property type="evidence" value="ECO:0007669"/>
    <property type="project" value="UniProtKB-UniRule"/>
</dbReference>
<dbReference type="GO" id="GO:0009234">
    <property type="term" value="P:menaquinone biosynthetic process"/>
    <property type="evidence" value="ECO:0007669"/>
    <property type="project" value="UniProtKB-UniRule"/>
</dbReference>
<dbReference type="CDD" id="cd07037">
    <property type="entry name" value="TPP_PYR_MenD"/>
    <property type="match status" value="1"/>
</dbReference>
<dbReference type="CDD" id="cd02009">
    <property type="entry name" value="TPP_SHCHC_synthase"/>
    <property type="match status" value="1"/>
</dbReference>
<dbReference type="Gene3D" id="3.40.50.970">
    <property type="match status" value="2"/>
</dbReference>
<dbReference type="Gene3D" id="3.40.50.1220">
    <property type="entry name" value="TPP-binding domain"/>
    <property type="match status" value="1"/>
</dbReference>
<dbReference type="HAMAP" id="MF_01659">
    <property type="entry name" value="MenD"/>
    <property type="match status" value="1"/>
</dbReference>
<dbReference type="InterPro" id="IPR004433">
    <property type="entry name" value="MenaQ_synth_MenD"/>
</dbReference>
<dbReference type="InterPro" id="IPR032264">
    <property type="entry name" value="MenD_middle"/>
</dbReference>
<dbReference type="InterPro" id="IPR029061">
    <property type="entry name" value="THDP-binding"/>
</dbReference>
<dbReference type="InterPro" id="IPR012001">
    <property type="entry name" value="Thiamin_PyroP_enz_TPP-bd_dom"/>
</dbReference>
<dbReference type="InterPro" id="IPR011766">
    <property type="entry name" value="TPP_enzyme_TPP-bd"/>
</dbReference>
<dbReference type="NCBIfam" id="TIGR00173">
    <property type="entry name" value="menD"/>
    <property type="match status" value="1"/>
</dbReference>
<dbReference type="PANTHER" id="PTHR42916">
    <property type="entry name" value="2-SUCCINYL-5-ENOLPYRUVYL-6-HYDROXY-3-CYCLOHEXENE-1-CARBOXYLATE SYNTHASE"/>
    <property type="match status" value="1"/>
</dbReference>
<dbReference type="PANTHER" id="PTHR42916:SF1">
    <property type="entry name" value="PROTEIN PHYLLO, CHLOROPLASTIC"/>
    <property type="match status" value="1"/>
</dbReference>
<dbReference type="Pfam" id="PF02775">
    <property type="entry name" value="TPP_enzyme_C"/>
    <property type="match status" value="1"/>
</dbReference>
<dbReference type="Pfam" id="PF16582">
    <property type="entry name" value="TPP_enzyme_M_2"/>
    <property type="match status" value="1"/>
</dbReference>
<dbReference type="Pfam" id="PF02776">
    <property type="entry name" value="TPP_enzyme_N"/>
    <property type="match status" value="1"/>
</dbReference>
<dbReference type="PIRSF" id="PIRSF004983">
    <property type="entry name" value="MenD"/>
    <property type="match status" value="1"/>
</dbReference>
<dbReference type="SUPFAM" id="SSF52518">
    <property type="entry name" value="Thiamin diphosphate-binding fold (THDP-binding)"/>
    <property type="match status" value="2"/>
</dbReference>
<feature type="chain" id="PRO_0000341862" description="2-succinyl-5-enolpyruvyl-6-hydroxy-3-cyclohexene-1-carboxylate synthase">
    <location>
        <begin position="1"/>
        <end position="557"/>
    </location>
</feature>
<protein>
    <recommendedName>
        <fullName evidence="1">2-succinyl-5-enolpyruvyl-6-hydroxy-3-cyclohexene-1-carboxylate synthase</fullName>
        <shortName evidence="1">SEPHCHC synthase</shortName>
        <ecNumber evidence="1">2.2.1.9</ecNumber>
    </recommendedName>
    <alternativeName>
        <fullName evidence="1">Menaquinone biosynthesis protein MenD</fullName>
    </alternativeName>
</protein>